<proteinExistence type="predicted"/>
<reference key="1">
    <citation type="journal article" date="1996" name="Science">
        <title>Complete genome sequence of the methanogenic archaeon, Methanococcus jannaschii.</title>
        <authorList>
            <person name="Bult C.J."/>
            <person name="White O."/>
            <person name="Olsen G.J."/>
            <person name="Zhou L."/>
            <person name="Fleischmann R.D."/>
            <person name="Sutton G.G."/>
            <person name="Blake J.A."/>
            <person name="FitzGerald L.M."/>
            <person name="Clayton R.A."/>
            <person name="Gocayne J.D."/>
            <person name="Kerlavage A.R."/>
            <person name="Dougherty B.A."/>
            <person name="Tomb J.-F."/>
            <person name="Adams M.D."/>
            <person name="Reich C.I."/>
            <person name="Overbeek R."/>
            <person name="Kirkness E.F."/>
            <person name="Weinstock K.G."/>
            <person name="Merrick J.M."/>
            <person name="Glodek A."/>
            <person name="Scott J.L."/>
            <person name="Geoghagen N.S.M."/>
            <person name="Weidman J.F."/>
            <person name="Fuhrmann J.L."/>
            <person name="Nguyen D."/>
            <person name="Utterback T.R."/>
            <person name="Kelley J.M."/>
            <person name="Peterson J.D."/>
            <person name="Sadow P.W."/>
            <person name="Hanna M.C."/>
            <person name="Cotton M.D."/>
            <person name="Roberts K.M."/>
            <person name="Hurst M.A."/>
            <person name="Kaine B.P."/>
            <person name="Borodovsky M."/>
            <person name="Klenk H.-P."/>
            <person name="Fraser C.M."/>
            <person name="Smith H.O."/>
            <person name="Woese C.R."/>
            <person name="Venter J.C."/>
        </authorList>
    </citation>
    <scope>NUCLEOTIDE SEQUENCE [LARGE SCALE GENOMIC DNA]</scope>
    <source>
        <strain>ATCC 43067 / DSM 2661 / JAL-1 / JCM 10045 / NBRC 100440</strain>
    </source>
</reference>
<accession>Q57738</accession>
<protein>
    <recommendedName>
        <fullName>Uncharacterized protein MJ0290</fullName>
    </recommendedName>
</protein>
<sequence length="211" mass="24620">MKCISKQGEIKELIKNGKINDVLQLIEEDTLLLEEIYGFLKSDDIQLKITCLAILGNLYLKGKVQITQLIKHLEEVLLENDKDAILNALLILKEIPEVYQEDLLKRIILKYIGKDIKDCEDDKDKSTLPSVKRDKIMIIFEILKAVKNKELKKTKIMYAANLDWKTFRNYIGYLLDNEFIRKTDGVYTLTPKGELLLEKIEEVFRLIYPDK</sequence>
<gene>
    <name type="ordered locus">MJ0290</name>
</gene>
<keyword id="KW-1185">Reference proteome</keyword>
<name>Y290_METJA</name>
<dbReference type="EMBL" id="L77117">
    <property type="protein sequence ID" value="AAB98283.1"/>
    <property type="molecule type" value="Genomic_DNA"/>
</dbReference>
<dbReference type="PIR" id="C64336">
    <property type="entry name" value="C64336"/>
</dbReference>
<dbReference type="RefSeq" id="WP_010869788.1">
    <property type="nucleotide sequence ID" value="NC_000909.1"/>
</dbReference>
<dbReference type="SMR" id="Q57738"/>
<dbReference type="STRING" id="243232.MJ_0290"/>
<dbReference type="PaxDb" id="243232-MJ_0290"/>
<dbReference type="EnsemblBacteria" id="AAB98283">
    <property type="protein sequence ID" value="AAB98283"/>
    <property type="gene ID" value="MJ_0290"/>
</dbReference>
<dbReference type="GeneID" id="1451145"/>
<dbReference type="KEGG" id="mja:MJ_0290"/>
<dbReference type="eggNOG" id="arCOG01055">
    <property type="taxonomic scope" value="Archaea"/>
</dbReference>
<dbReference type="eggNOG" id="arCOG06652">
    <property type="taxonomic scope" value="Archaea"/>
</dbReference>
<dbReference type="HOGENOM" id="CLU_1313130_0_0_2"/>
<dbReference type="InParanoid" id="Q57738"/>
<dbReference type="OrthoDB" id="65744at2157"/>
<dbReference type="Proteomes" id="UP000000805">
    <property type="component" value="Chromosome"/>
</dbReference>
<dbReference type="Gene3D" id="1.10.10.10">
    <property type="entry name" value="Winged helix-like DNA-binding domain superfamily/Winged helix DNA-binding domain"/>
    <property type="match status" value="1"/>
</dbReference>
<dbReference type="InterPro" id="IPR016024">
    <property type="entry name" value="ARM-type_fold"/>
</dbReference>
<dbReference type="InterPro" id="IPR038723">
    <property type="entry name" value="ArnR1-like_HTH"/>
</dbReference>
<dbReference type="InterPro" id="IPR036388">
    <property type="entry name" value="WH-like_DNA-bd_sf"/>
</dbReference>
<dbReference type="InterPro" id="IPR036390">
    <property type="entry name" value="WH_DNA-bd_sf"/>
</dbReference>
<dbReference type="Pfam" id="PF14947">
    <property type="entry name" value="HTH_45"/>
    <property type="match status" value="1"/>
</dbReference>
<dbReference type="SUPFAM" id="SSF48371">
    <property type="entry name" value="ARM repeat"/>
    <property type="match status" value="1"/>
</dbReference>
<dbReference type="SUPFAM" id="SSF46785">
    <property type="entry name" value="Winged helix' DNA-binding domain"/>
    <property type="match status" value="1"/>
</dbReference>
<organism>
    <name type="scientific">Methanocaldococcus jannaschii (strain ATCC 43067 / DSM 2661 / JAL-1 / JCM 10045 / NBRC 100440)</name>
    <name type="common">Methanococcus jannaschii</name>
    <dbReference type="NCBI Taxonomy" id="243232"/>
    <lineage>
        <taxon>Archaea</taxon>
        <taxon>Methanobacteriati</taxon>
        <taxon>Methanobacteriota</taxon>
        <taxon>Methanomada group</taxon>
        <taxon>Methanococci</taxon>
        <taxon>Methanococcales</taxon>
        <taxon>Methanocaldococcaceae</taxon>
        <taxon>Methanocaldococcus</taxon>
    </lineage>
</organism>
<feature type="chain" id="PRO_0000106777" description="Uncharacterized protein MJ0290">
    <location>
        <begin position="1"/>
        <end position="211"/>
    </location>
</feature>